<keyword id="KW-0066">ATP synthesis</keyword>
<keyword id="KW-0138">CF(0)</keyword>
<keyword id="KW-0375">Hydrogen ion transport</keyword>
<keyword id="KW-0406">Ion transport</keyword>
<keyword id="KW-0472">Membrane</keyword>
<keyword id="KW-0793">Thylakoid</keyword>
<keyword id="KW-0812">Transmembrane</keyword>
<keyword id="KW-1133">Transmembrane helix</keyword>
<keyword id="KW-0813">Transport</keyword>
<comment type="function">
    <text evidence="1">Key component of the proton channel; it plays a direct role in the translocation of protons across the membrane.</text>
</comment>
<comment type="subunit">
    <text evidence="1">F-type ATPases have 2 components, CF(1) - the catalytic core - and CF(0) - the membrane proton channel. CF(1) has five subunits: alpha(3), beta(3), gamma(1), delta(1), epsilon(1). CF(0) has four main subunits: a, b, b' and c.</text>
</comment>
<comment type="subcellular location">
    <subcellularLocation>
        <location evidence="1">Cellular thylakoid membrane</location>
        <topology evidence="1">Multi-pass membrane protein</topology>
    </subcellularLocation>
</comment>
<comment type="similarity">
    <text evidence="1">Belongs to the ATPase A chain family.</text>
</comment>
<dbReference type="EMBL" id="CP000110">
    <property type="protein sequence ID" value="ABB35932.1"/>
    <property type="molecule type" value="Genomic_DNA"/>
</dbReference>
<dbReference type="RefSeq" id="WP_006852023.1">
    <property type="nucleotide sequence ID" value="NC_007516.1"/>
</dbReference>
<dbReference type="SMR" id="Q3AHK0"/>
<dbReference type="STRING" id="110662.Syncc9605_2193"/>
<dbReference type="KEGG" id="syd:Syncc9605_2193"/>
<dbReference type="eggNOG" id="COG0356">
    <property type="taxonomic scope" value="Bacteria"/>
</dbReference>
<dbReference type="HOGENOM" id="CLU_041018_2_4_3"/>
<dbReference type="OrthoDB" id="9789241at2"/>
<dbReference type="GO" id="GO:0031676">
    <property type="term" value="C:plasma membrane-derived thylakoid membrane"/>
    <property type="evidence" value="ECO:0007669"/>
    <property type="project" value="UniProtKB-SubCell"/>
</dbReference>
<dbReference type="GO" id="GO:0045259">
    <property type="term" value="C:proton-transporting ATP synthase complex"/>
    <property type="evidence" value="ECO:0007669"/>
    <property type="project" value="UniProtKB-KW"/>
</dbReference>
<dbReference type="GO" id="GO:0046933">
    <property type="term" value="F:proton-transporting ATP synthase activity, rotational mechanism"/>
    <property type="evidence" value="ECO:0007669"/>
    <property type="project" value="UniProtKB-UniRule"/>
</dbReference>
<dbReference type="CDD" id="cd00310">
    <property type="entry name" value="ATP-synt_Fo_a_6"/>
    <property type="match status" value="1"/>
</dbReference>
<dbReference type="FunFam" id="1.20.120.220:FF:000001">
    <property type="entry name" value="ATP synthase subunit a, chloroplastic"/>
    <property type="match status" value="1"/>
</dbReference>
<dbReference type="Gene3D" id="1.20.120.220">
    <property type="entry name" value="ATP synthase, F0 complex, subunit A"/>
    <property type="match status" value="1"/>
</dbReference>
<dbReference type="HAMAP" id="MF_01393">
    <property type="entry name" value="ATP_synth_a_bact"/>
    <property type="match status" value="1"/>
</dbReference>
<dbReference type="InterPro" id="IPR045082">
    <property type="entry name" value="ATP_syn_F0_a_bact/chloroplast"/>
</dbReference>
<dbReference type="InterPro" id="IPR000568">
    <property type="entry name" value="ATP_synth_F0_asu"/>
</dbReference>
<dbReference type="InterPro" id="IPR023011">
    <property type="entry name" value="ATP_synth_F0_asu_AS"/>
</dbReference>
<dbReference type="InterPro" id="IPR035908">
    <property type="entry name" value="F0_ATP_A_sf"/>
</dbReference>
<dbReference type="NCBIfam" id="TIGR01131">
    <property type="entry name" value="ATP_synt_6_or_A"/>
    <property type="match status" value="1"/>
</dbReference>
<dbReference type="PANTHER" id="PTHR42823">
    <property type="entry name" value="ATP SYNTHASE SUBUNIT A, CHLOROPLASTIC"/>
    <property type="match status" value="1"/>
</dbReference>
<dbReference type="PANTHER" id="PTHR42823:SF3">
    <property type="entry name" value="ATP SYNTHASE SUBUNIT A, CHLOROPLASTIC"/>
    <property type="match status" value="1"/>
</dbReference>
<dbReference type="Pfam" id="PF00119">
    <property type="entry name" value="ATP-synt_A"/>
    <property type="match status" value="1"/>
</dbReference>
<dbReference type="PRINTS" id="PR00123">
    <property type="entry name" value="ATPASEA"/>
</dbReference>
<dbReference type="SUPFAM" id="SSF81336">
    <property type="entry name" value="F1F0 ATP synthase subunit A"/>
    <property type="match status" value="1"/>
</dbReference>
<dbReference type="PROSITE" id="PS00449">
    <property type="entry name" value="ATPASE_A"/>
    <property type="match status" value="1"/>
</dbReference>
<name>ATP6_SYNSC</name>
<accession>Q3AHK0</accession>
<organism>
    <name type="scientific">Synechococcus sp. (strain CC9605)</name>
    <dbReference type="NCBI Taxonomy" id="110662"/>
    <lineage>
        <taxon>Bacteria</taxon>
        <taxon>Bacillati</taxon>
        <taxon>Cyanobacteriota</taxon>
        <taxon>Cyanophyceae</taxon>
        <taxon>Synechococcales</taxon>
        <taxon>Synechococcaceae</taxon>
        <taxon>Synechococcus</taxon>
    </lineage>
</organism>
<protein>
    <recommendedName>
        <fullName evidence="1">ATP synthase subunit a</fullName>
    </recommendedName>
    <alternativeName>
        <fullName evidence="1">ATP synthase F0 sector subunit a</fullName>
    </alternativeName>
    <alternativeName>
        <fullName evidence="1">F-ATPase subunit 6</fullName>
    </alternativeName>
</protein>
<proteinExistence type="inferred from homology"/>
<reference key="1">
    <citation type="submission" date="2005-07" db="EMBL/GenBank/DDBJ databases">
        <title>Complete sequence of Synechococcus sp. CC9605.</title>
        <authorList>
            <consortium name="US DOE Joint Genome Institute"/>
            <person name="Copeland A."/>
            <person name="Lucas S."/>
            <person name="Lapidus A."/>
            <person name="Barry K."/>
            <person name="Detter J.C."/>
            <person name="Glavina T."/>
            <person name="Hammon N."/>
            <person name="Israni S."/>
            <person name="Pitluck S."/>
            <person name="Schmutz J."/>
            <person name="Martinez M."/>
            <person name="Larimer F."/>
            <person name="Land M."/>
            <person name="Kyrpides N."/>
            <person name="Ivanova N."/>
            <person name="Richardson P."/>
        </authorList>
    </citation>
    <scope>NUCLEOTIDE SEQUENCE [LARGE SCALE GENOMIC DNA]</scope>
    <source>
        <strain>CC9605</strain>
    </source>
</reference>
<evidence type="ECO:0000255" key="1">
    <source>
        <dbReference type="HAMAP-Rule" id="MF_01393"/>
    </source>
</evidence>
<sequence length="241" mass="27097">MALLPLPLPFAELEVGHHLYWQIGDLYLHGQVFLSSWILIGILLAVVLVGTRGMKRDPIGLQNLLEFLWNFIRDIARDNIGEKYYRDWLPFIGTLFLFIFVSNWGGALIPWKIFELPEGELGAPTADINTTVAMALLVSLAYFYAGLSRKGLRFFELYVEPTPIMLPFKIIEEFTKPLSLSFRLFGNILADELAVGVLVYLVPLIVPLPVMLLGLFTSAIQALIFATLASFYIGEGLHEAH</sequence>
<feature type="chain" id="PRO_0000362486" description="ATP synthase subunit a">
    <location>
        <begin position="1"/>
        <end position="241"/>
    </location>
</feature>
<feature type="transmembrane region" description="Helical" evidence="1">
    <location>
        <begin position="30"/>
        <end position="50"/>
    </location>
</feature>
<feature type="transmembrane region" description="Helical" evidence="1">
    <location>
        <begin position="89"/>
        <end position="109"/>
    </location>
</feature>
<feature type="transmembrane region" description="Helical" evidence="1">
    <location>
        <begin position="128"/>
        <end position="148"/>
    </location>
</feature>
<feature type="transmembrane region" description="Helical" evidence="1">
    <location>
        <begin position="193"/>
        <end position="213"/>
    </location>
</feature>
<feature type="transmembrane region" description="Helical" evidence="1">
    <location>
        <begin position="214"/>
        <end position="234"/>
    </location>
</feature>
<gene>
    <name evidence="1" type="primary">atpB</name>
    <name evidence="1" type="synonym">atpI</name>
    <name type="ordered locus">Syncc9605_2193</name>
</gene>